<sequence length="92" mass="10597">MARSLKKNPFVAFHLLEKVEKLNIRKEKEIIVTWSRASTIIPTMVGHTIAVHNGKEHLPVFITDRMVGHKLGEFAPTLTFRGHARNDNRSRR</sequence>
<gene>
    <name evidence="1" type="primary">rps19</name>
</gene>
<reference key="1">
    <citation type="journal article" date="2007" name="Proc. Natl. Acad. Sci. U.S.A.">
        <title>Using plastid genome-scale data to resolve enigmatic relationships among basal angiosperms.</title>
        <authorList>
            <person name="Moore M.J."/>
            <person name="Bell C.D."/>
            <person name="Soltis P.S."/>
            <person name="Soltis D.E."/>
        </authorList>
    </citation>
    <scope>NUCLEOTIDE SEQUENCE [LARGE SCALE GENOMIC DNA]</scope>
</reference>
<reference key="2">
    <citation type="journal article" date="2008" name="BMC Evol. Biol.">
        <title>Dynamics and evolution of the inverted repeat-large single copy junctions in the chloroplast genomes of monocots.</title>
        <authorList>
            <person name="Wang R.-J."/>
            <person name="Cheng C.-L."/>
            <person name="Chang C.-C."/>
            <person name="Wu C.-L."/>
            <person name="Su T.-M."/>
            <person name="Chaw S.-M."/>
        </authorList>
    </citation>
    <scope>NUCLEOTIDE SEQUENCE [GENOMIC DNA]</scope>
</reference>
<protein>
    <recommendedName>
        <fullName evidence="1">Small ribosomal subunit protein uS19c</fullName>
    </recommendedName>
    <alternativeName>
        <fullName evidence="2">30S ribosomal protein S19, chloroplastic</fullName>
    </alternativeName>
</protein>
<feature type="chain" id="PRO_0000354340" description="Small ribosomal subunit protein uS19c">
    <location>
        <begin position="1"/>
        <end position="92"/>
    </location>
</feature>
<keyword id="KW-0150">Chloroplast</keyword>
<keyword id="KW-0934">Plastid</keyword>
<keyword id="KW-0687">Ribonucleoprotein</keyword>
<keyword id="KW-0689">Ribosomal protein</keyword>
<keyword id="KW-0694">RNA-binding</keyword>
<keyword id="KW-0699">rRNA-binding</keyword>
<proteinExistence type="inferred from homology"/>
<comment type="function">
    <text evidence="1">Protein S19 forms a complex with S13 that binds strongly to the 16S ribosomal RNA.</text>
</comment>
<comment type="subcellular location">
    <subcellularLocation>
        <location>Plastid</location>
        <location>Chloroplast</location>
    </subcellularLocation>
</comment>
<comment type="similarity">
    <text evidence="1">Belongs to the universal ribosomal protein uS19 family.</text>
</comment>
<geneLocation type="chloroplast"/>
<accession>A8SEE4</accession>
<evidence type="ECO:0000255" key="1">
    <source>
        <dbReference type="HAMAP-Rule" id="MF_00531"/>
    </source>
</evidence>
<evidence type="ECO:0000305" key="2"/>
<name>RR19_CERDE</name>
<organism>
    <name type="scientific">Ceratophyllum demersum</name>
    <name type="common">Rigid hornwort</name>
    <name type="synonym">Coontail</name>
    <dbReference type="NCBI Taxonomy" id="4428"/>
    <lineage>
        <taxon>Eukaryota</taxon>
        <taxon>Viridiplantae</taxon>
        <taxon>Streptophyta</taxon>
        <taxon>Embryophyta</taxon>
        <taxon>Tracheophyta</taxon>
        <taxon>Spermatophyta</taxon>
        <taxon>Magnoliopsida</taxon>
        <taxon>Ceratophyllales</taxon>
        <taxon>Ceratophyllaceae</taxon>
        <taxon>Ceratophyllum</taxon>
    </lineage>
</organism>
<dbReference type="EMBL" id="EF614270">
    <property type="protein sequence ID" value="ABQ81492.1"/>
    <property type="molecule type" value="Genomic_DNA"/>
</dbReference>
<dbReference type="EMBL" id="AB331348">
    <property type="protein sequence ID" value="BAG06542.1"/>
    <property type="molecule type" value="Genomic_DNA"/>
</dbReference>
<dbReference type="RefSeq" id="YP_001542488.1">
    <property type="nucleotide sequence ID" value="NC_009962.1"/>
</dbReference>
<dbReference type="SMR" id="A8SEE4"/>
<dbReference type="GeneID" id="5729457"/>
<dbReference type="GO" id="GO:0009507">
    <property type="term" value="C:chloroplast"/>
    <property type="evidence" value="ECO:0007669"/>
    <property type="project" value="UniProtKB-SubCell"/>
</dbReference>
<dbReference type="GO" id="GO:0005763">
    <property type="term" value="C:mitochondrial small ribosomal subunit"/>
    <property type="evidence" value="ECO:0007669"/>
    <property type="project" value="TreeGrafter"/>
</dbReference>
<dbReference type="GO" id="GO:0019843">
    <property type="term" value="F:rRNA binding"/>
    <property type="evidence" value="ECO:0007669"/>
    <property type="project" value="UniProtKB-UniRule"/>
</dbReference>
<dbReference type="GO" id="GO:0003735">
    <property type="term" value="F:structural constituent of ribosome"/>
    <property type="evidence" value="ECO:0007669"/>
    <property type="project" value="InterPro"/>
</dbReference>
<dbReference type="GO" id="GO:0000028">
    <property type="term" value="P:ribosomal small subunit assembly"/>
    <property type="evidence" value="ECO:0007669"/>
    <property type="project" value="TreeGrafter"/>
</dbReference>
<dbReference type="GO" id="GO:0006412">
    <property type="term" value="P:translation"/>
    <property type="evidence" value="ECO:0007669"/>
    <property type="project" value="UniProtKB-UniRule"/>
</dbReference>
<dbReference type="FunFam" id="3.30.860.10:FF:000001">
    <property type="entry name" value="30S ribosomal protein S19"/>
    <property type="match status" value="1"/>
</dbReference>
<dbReference type="Gene3D" id="3.30.860.10">
    <property type="entry name" value="30s Ribosomal Protein S19, Chain A"/>
    <property type="match status" value="1"/>
</dbReference>
<dbReference type="HAMAP" id="MF_00531">
    <property type="entry name" value="Ribosomal_uS19"/>
    <property type="match status" value="1"/>
</dbReference>
<dbReference type="InterPro" id="IPR002222">
    <property type="entry name" value="Ribosomal_uS19"/>
</dbReference>
<dbReference type="InterPro" id="IPR005732">
    <property type="entry name" value="Ribosomal_uS19_bac-type"/>
</dbReference>
<dbReference type="InterPro" id="IPR020934">
    <property type="entry name" value="Ribosomal_uS19_CS"/>
</dbReference>
<dbReference type="InterPro" id="IPR023575">
    <property type="entry name" value="Ribosomal_uS19_SF"/>
</dbReference>
<dbReference type="NCBIfam" id="TIGR01050">
    <property type="entry name" value="rpsS_bact"/>
    <property type="match status" value="1"/>
</dbReference>
<dbReference type="PANTHER" id="PTHR11880">
    <property type="entry name" value="RIBOSOMAL PROTEIN S19P FAMILY MEMBER"/>
    <property type="match status" value="1"/>
</dbReference>
<dbReference type="PANTHER" id="PTHR11880:SF8">
    <property type="entry name" value="SMALL RIBOSOMAL SUBUNIT PROTEIN US19M"/>
    <property type="match status" value="1"/>
</dbReference>
<dbReference type="Pfam" id="PF00203">
    <property type="entry name" value="Ribosomal_S19"/>
    <property type="match status" value="1"/>
</dbReference>
<dbReference type="PIRSF" id="PIRSF002144">
    <property type="entry name" value="Ribosomal_S19"/>
    <property type="match status" value="1"/>
</dbReference>
<dbReference type="PRINTS" id="PR00975">
    <property type="entry name" value="RIBOSOMALS19"/>
</dbReference>
<dbReference type="SUPFAM" id="SSF54570">
    <property type="entry name" value="Ribosomal protein S19"/>
    <property type="match status" value="1"/>
</dbReference>
<dbReference type="PROSITE" id="PS00323">
    <property type="entry name" value="RIBOSOMAL_S19"/>
    <property type="match status" value="1"/>
</dbReference>